<organism>
    <name type="scientific">Chloroflexus aurantiacus (strain ATCC 29364 / DSM 637 / Y-400-fl)</name>
    <dbReference type="NCBI Taxonomy" id="480224"/>
    <lineage>
        <taxon>Bacteria</taxon>
        <taxon>Bacillati</taxon>
        <taxon>Chloroflexota</taxon>
        <taxon>Chloroflexia</taxon>
        <taxon>Chloroflexales</taxon>
        <taxon>Chloroflexineae</taxon>
        <taxon>Chloroflexaceae</taxon>
        <taxon>Chloroflexus</taxon>
    </lineage>
</organism>
<accession>B9LFN2</accession>
<dbReference type="EC" id="4.3.2.10" evidence="1"/>
<dbReference type="EMBL" id="CP001364">
    <property type="protein sequence ID" value="ACM53383.1"/>
    <property type="molecule type" value="Genomic_DNA"/>
</dbReference>
<dbReference type="SMR" id="B9LFN2"/>
<dbReference type="KEGG" id="chl:Chy400_1978"/>
<dbReference type="HOGENOM" id="CLU_048577_4_0_0"/>
<dbReference type="OrthoDB" id="9781903at2"/>
<dbReference type="UniPathway" id="UPA00031">
    <property type="reaction ID" value="UER00010"/>
</dbReference>
<dbReference type="GO" id="GO:0005737">
    <property type="term" value="C:cytoplasm"/>
    <property type="evidence" value="ECO:0007669"/>
    <property type="project" value="UniProtKB-SubCell"/>
</dbReference>
<dbReference type="GO" id="GO:0000107">
    <property type="term" value="F:imidazoleglycerol-phosphate synthase activity"/>
    <property type="evidence" value="ECO:0007669"/>
    <property type="project" value="UniProtKB-UniRule"/>
</dbReference>
<dbReference type="GO" id="GO:0016829">
    <property type="term" value="F:lyase activity"/>
    <property type="evidence" value="ECO:0007669"/>
    <property type="project" value="UniProtKB-KW"/>
</dbReference>
<dbReference type="GO" id="GO:0000105">
    <property type="term" value="P:L-histidine biosynthetic process"/>
    <property type="evidence" value="ECO:0007669"/>
    <property type="project" value="UniProtKB-UniRule"/>
</dbReference>
<dbReference type="CDD" id="cd04731">
    <property type="entry name" value="HisF"/>
    <property type="match status" value="1"/>
</dbReference>
<dbReference type="FunFam" id="3.20.20.70:FF:000006">
    <property type="entry name" value="Imidazole glycerol phosphate synthase subunit HisF"/>
    <property type="match status" value="1"/>
</dbReference>
<dbReference type="Gene3D" id="3.20.20.70">
    <property type="entry name" value="Aldolase class I"/>
    <property type="match status" value="1"/>
</dbReference>
<dbReference type="HAMAP" id="MF_01013">
    <property type="entry name" value="HisF"/>
    <property type="match status" value="1"/>
</dbReference>
<dbReference type="InterPro" id="IPR013785">
    <property type="entry name" value="Aldolase_TIM"/>
</dbReference>
<dbReference type="InterPro" id="IPR006062">
    <property type="entry name" value="His_biosynth"/>
</dbReference>
<dbReference type="InterPro" id="IPR004651">
    <property type="entry name" value="HisF"/>
</dbReference>
<dbReference type="InterPro" id="IPR050064">
    <property type="entry name" value="IGPS_HisA/HisF"/>
</dbReference>
<dbReference type="InterPro" id="IPR011060">
    <property type="entry name" value="RibuloseP-bd_barrel"/>
</dbReference>
<dbReference type="NCBIfam" id="TIGR00735">
    <property type="entry name" value="hisF"/>
    <property type="match status" value="1"/>
</dbReference>
<dbReference type="PANTHER" id="PTHR21235:SF2">
    <property type="entry name" value="IMIDAZOLE GLYCEROL PHOSPHATE SYNTHASE HISHF"/>
    <property type="match status" value="1"/>
</dbReference>
<dbReference type="PANTHER" id="PTHR21235">
    <property type="entry name" value="IMIDAZOLE GLYCEROL PHOSPHATE SYNTHASE SUBUNIT HISF/H IGP SYNTHASE SUBUNIT HISF/H"/>
    <property type="match status" value="1"/>
</dbReference>
<dbReference type="Pfam" id="PF00977">
    <property type="entry name" value="His_biosynth"/>
    <property type="match status" value="1"/>
</dbReference>
<dbReference type="SUPFAM" id="SSF51366">
    <property type="entry name" value="Ribulose-phoshate binding barrel"/>
    <property type="match status" value="1"/>
</dbReference>
<proteinExistence type="inferred from homology"/>
<evidence type="ECO:0000255" key="1">
    <source>
        <dbReference type="HAMAP-Rule" id="MF_01013"/>
    </source>
</evidence>
<gene>
    <name evidence="1" type="primary">hisF</name>
    <name type="ordered locus">Chy400_1978</name>
</gene>
<protein>
    <recommendedName>
        <fullName evidence="1">Imidazole glycerol phosphate synthase subunit HisF</fullName>
        <ecNumber evidence="1">4.3.2.10</ecNumber>
    </recommendedName>
    <alternativeName>
        <fullName evidence="1">IGP synthase cyclase subunit</fullName>
    </alternativeName>
    <alternativeName>
        <fullName evidence="1">IGP synthase subunit HisF</fullName>
    </alternativeName>
    <alternativeName>
        <fullName evidence="1">ImGP synthase subunit HisF</fullName>
        <shortName evidence="1">IGPS subunit HisF</shortName>
    </alternativeName>
</protein>
<feature type="chain" id="PRO_1000148912" description="Imidazole glycerol phosphate synthase subunit HisF">
    <location>
        <begin position="1"/>
        <end position="259"/>
    </location>
</feature>
<feature type="active site" evidence="1">
    <location>
        <position position="11"/>
    </location>
</feature>
<feature type="active site" evidence="1">
    <location>
        <position position="130"/>
    </location>
</feature>
<sequence>MLTRRIIPCLDVKAGRVVKGVKFLNHRDAGDPVELAAAYNAAGADELVFYDITASSDERAIMVEVVERTAAEVFIPLTVGGGLRSVDDMYRMLRAGADKVSLNTAAVYNPQLIAEGARRFGSQCIVLSVDAKRVNAPGEPPRWEVFTHTGANPRPTGLDAIEWIKRGIDLGAGEICINSMDADGARTGYDLELLQAITAISPVPVIASGGVGSPHDMYRGIVEGGADAVLAASIFHFGDYSVADVKRYLAERGVAVRMI</sequence>
<keyword id="KW-0028">Amino-acid biosynthesis</keyword>
<keyword id="KW-0963">Cytoplasm</keyword>
<keyword id="KW-0368">Histidine biosynthesis</keyword>
<keyword id="KW-0456">Lyase</keyword>
<comment type="function">
    <text evidence="1">IGPS catalyzes the conversion of PRFAR and glutamine to IGP, AICAR and glutamate. The HisF subunit catalyzes the cyclization activity that produces IGP and AICAR from PRFAR using the ammonia provided by the HisH subunit.</text>
</comment>
<comment type="catalytic activity">
    <reaction evidence="1">
        <text>5-[(5-phospho-1-deoxy-D-ribulos-1-ylimino)methylamino]-1-(5-phospho-beta-D-ribosyl)imidazole-4-carboxamide + L-glutamine = D-erythro-1-(imidazol-4-yl)glycerol 3-phosphate + 5-amino-1-(5-phospho-beta-D-ribosyl)imidazole-4-carboxamide + L-glutamate + H(+)</text>
        <dbReference type="Rhea" id="RHEA:24793"/>
        <dbReference type="ChEBI" id="CHEBI:15378"/>
        <dbReference type="ChEBI" id="CHEBI:29985"/>
        <dbReference type="ChEBI" id="CHEBI:58278"/>
        <dbReference type="ChEBI" id="CHEBI:58359"/>
        <dbReference type="ChEBI" id="CHEBI:58475"/>
        <dbReference type="ChEBI" id="CHEBI:58525"/>
        <dbReference type="EC" id="4.3.2.10"/>
    </reaction>
</comment>
<comment type="pathway">
    <text evidence="1">Amino-acid biosynthesis; L-histidine biosynthesis; L-histidine from 5-phospho-alpha-D-ribose 1-diphosphate: step 5/9.</text>
</comment>
<comment type="subunit">
    <text evidence="1">Heterodimer of HisH and HisF.</text>
</comment>
<comment type="subcellular location">
    <subcellularLocation>
        <location evidence="1">Cytoplasm</location>
    </subcellularLocation>
</comment>
<comment type="similarity">
    <text evidence="1">Belongs to the HisA/HisF family.</text>
</comment>
<name>HIS6_CHLSY</name>
<reference key="1">
    <citation type="submission" date="2009-01" db="EMBL/GenBank/DDBJ databases">
        <title>Complete sequence of Chloroflexus sp. Y-400-fl.</title>
        <authorList>
            <consortium name="US DOE Joint Genome Institute"/>
            <person name="Lucas S."/>
            <person name="Copeland A."/>
            <person name="Lapidus A."/>
            <person name="Glavina del Rio T."/>
            <person name="Dalin E."/>
            <person name="Tice H."/>
            <person name="Bruce D."/>
            <person name="Goodwin L."/>
            <person name="Pitluck S."/>
            <person name="Sims D."/>
            <person name="Kiss H."/>
            <person name="Brettin T."/>
            <person name="Detter J.C."/>
            <person name="Han C."/>
            <person name="Larimer F."/>
            <person name="Land M."/>
            <person name="Hauser L."/>
            <person name="Kyrpides N."/>
            <person name="Ovchinnikova G."/>
            <person name="Bryant D.A."/>
            <person name="Richardson P."/>
        </authorList>
    </citation>
    <scope>NUCLEOTIDE SEQUENCE [LARGE SCALE GENOMIC DNA]</scope>
    <source>
        <strain>ATCC 29364 / DSM 637 / Y-400-fl</strain>
    </source>
</reference>